<dbReference type="EC" id="6.1.1.3" evidence="1"/>
<dbReference type="EMBL" id="AF222894">
    <property type="protein sequence ID" value="AAF30947.1"/>
    <property type="molecule type" value="Genomic_DNA"/>
</dbReference>
<dbReference type="RefSeq" id="WP_006688784.1">
    <property type="nucleotide sequence ID" value="NC_002162.1"/>
</dbReference>
<dbReference type="SMR" id="Q9PPV6"/>
<dbReference type="STRING" id="273119.UU534"/>
<dbReference type="EnsemblBacteria" id="AAF30947">
    <property type="protein sequence ID" value="AAF30947"/>
    <property type="gene ID" value="UU534"/>
</dbReference>
<dbReference type="GeneID" id="29672404"/>
<dbReference type="KEGG" id="uur:UU534"/>
<dbReference type="eggNOG" id="COG0441">
    <property type="taxonomic scope" value="Bacteria"/>
</dbReference>
<dbReference type="HOGENOM" id="CLU_008554_3_1_14"/>
<dbReference type="OrthoDB" id="9802304at2"/>
<dbReference type="Proteomes" id="UP000000423">
    <property type="component" value="Chromosome"/>
</dbReference>
<dbReference type="GO" id="GO:0005737">
    <property type="term" value="C:cytoplasm"/>
    <property type="evidence" value="ECO:0007669"/>
    <property type="project" value="UniProtKB-SubCell"/>
</dbReference>
<dbReference type="GO" id="GO:0005524">
    <property type="term" value="F:ATP binding"/>
    <property type="evidence" value="ECO:0007669"/>
    <property type="project" value="UniProtKB-UniRule"/>
</dbReference>
<dbReference type="GO" id="GO:0046872">
    <property type="term" value="F:metal ion binding"/>
    <property type="evidence" value="ECO:0007669"/>
    <property type="project" value="UniProtKB-KW"/>
</dbReference>
<dbReference type="GO" id="GO:0004829">
    <property type="term" value="F:threonine-tRNA ligase activity"/>
    <property type="evidence" value="ECO:0007669"/>
    <property type="project" value="UniProtKB-UniRule"/>
</dbReference>
<dbReference type="GO" id="GO:0000049">
    <property type="term" value="F:tRNA binding"/>
    <property type="evidence" value="ECO:0007669"/>
    <property type="project" value="UniProtKB-KW"/>
</dbReference>
<dbReference type="GO" id="GO:0006435">
    <property type="term" value="P:threonyl-tRNA aminoacylation"/>
    <property type="evidence" value="ECO:0007669"/>
    <property type="project" value="UniProtKB-UniRule"/>
</dbReference>
<dbReference type="CDD" id="cd00860">
    <property type="entry name" value="ThrRS_anticodon"/>
    <property type="match status" value="1"/>
</dbReference>
<dbReference type="CDD" id="cd00771">
    <property type="entry name" value="ThrRS_core"/>
    <property type="match status" value="1"/>
</dbReference>
<dbReference type="FunFam" id="3.30.930.10:FF:000002">
    <property type="entry name" value="Threonine--tRNA ligase"/>
    <property type="match status" value="1"/>
</dbReference>
<dbReference type="FunFam" id="3.40.50.800:FF:000001">
    <property type="entry name" value="Threonine--tRNA ligase"/>
    <property type="match status" value="1"/>
</dbReference>
<dbReference type="FunFam" id="3.30.980.10:FF:000005">
    <property type="entry name" value="Threonyl-tRNA synthetase, mitochondrial"/>
    <property type="match status" value="1"/>
</dbReference>
<dbReference type="Gene3D" id="3.30.54.20">
    <property type="match status" value="1"/>
</dbReference>
<dbReference type="Gene3D" id="3.40.50.800">
    <property type="entry name" value="Anticodon-binding domain"/>
    <property type="match status" value="1"/>
</dbReference>
<dbReference type="Gene3D" id="3.30.930.10">
    <property type="entry name" value="Bira Bifunctional Protein, Domain 2"/>
    <property type="match status" value="1"/>
</dbReference>
<dbReference type="Gene3D" id="3.30.980.10">
    <property type="entry name" value="Threonyl-trna Synthetase, Chain A, domain 2"/>
    <property type="match status" value="1"/>
</dbReference>
<dbReference type="HAMAP" id="MF_00184">
    <property type="entry name" value="Thr_tRNA_synth"/>
    <property type="match status" value="1"/>
</dbReference>
<dbReference type="InterPro" id="IPR002314">
    <property type="entry name" value="aa-tRNA-synt_IIb"/>
</dbReference>
<dbReference type="InterPro" id="IPR006195">
    <property type="entry name" value="aa-tRNA-synth_II"/>
</dbReference>
<dbReference type="InterPro" id="IPR045864">
    <property type="entry name" value="aa-tRNA-synth_II/BPL/LPL"/>
</dbReference>
<dbReference type="InterPro" id="IPR004154">
    <property type="entry name" value="Anticodon-bd"/>
</dbReference>
<dbReference type="InterPro" id="IPR036621">
    <property type="entry name" value="Anticodon-bd_dom_sf"/>
</dbReference>
<dbReference type="InterPro" id="IPR002320">
    <property type="entry name" value="Thr-tRNA-ligase_IIa"/>
</dbReference>
<dbReference type="InterPro" id="IPR018163">
    <property type="entry name" value="Thr/Ala-tRNA-synth_IIc_edit"/>
</dbReference>
<dbReference type="InterPro" id="IPR047246">
    <property type="entry name" value="ThrRS_anticodon"/>
</dbReference>
<dbReference type="InterPro" id="IPR033728">
    <property type="entry name" value="ThrRS_core"/>
</dbReference>
<dbReference type="InterPro" id="IPR012947">
    <property type="entry name" value="tRNA_SAD"/>
</dbReference>
<dbReference type="NCBIfam" id="TIGR00418">
    <property type="entry name" value="thrS"/>
    <property type="match status" value="1"/>
</dbReference>
<dbReference type="PANTHER" id="PTHR11451:SF56">
    <property type="entry name" value="THREONINE--TRNA LIGASE 1"/>
    <property type="match status" value="1"/>
</dbReference>
<dbReference type="PANTHER" id="PTHR11451">
    <property type="entry name" value="THREONINE-TRNA LIGASE"/>
    <property type="match status" value="1"/>
</dbReference>
<dbReference type="Pfam" id="PF03129">
    <property type="entry name" value="HGTP_anticodon"/>
    <property type="match status" value="1"/>
</dbReference>
<dbReference type="Pfam" id="PF00587">
    <property type="entry name" value="tRNA-synt_2b"/>
    <property type="match status" value="1"/>
</dbReference>
<dbReference type="Pfam" id="PF07973">
    <property type="entry name" value="tRNA_SAD"/>
    <property type="match status" value="1"/>
</dbReference>
<dbReference type="PRINTS" id="PR01047">
    <property type="entry name" value="TRNASYNTHTHR"/>
</dbReference>
<dbReference type="SMART" id="SM00863">
    <property type="entry name" value="tRNA_SAD"/>
    <property type="match status" value="1"/>
</dbReference>
<dbReference type="SUPFAM" id="SSF52954">
    <property type="entry name" value="Class II aaRS ABD-related"/>
    <property type="match status" value="1"/>
</dbReference>
<dbReference type="SUPFAM" id="SSF55681">
    <property type="entry name" value="Class II aaRS and biotin synthetases"/>
    <property type="match status" value="1"/>
</dbReference>
<dbReference type="SUPFAM" id="SSF55186">
    <property type="entry name" value="ThrRS/AlaRS common domain"/>
    <property type="match status" value="1"/>
</dbReference>
<dbReference type="PROSITE" id="PS50862">
    <property type="entry name" value="AA_TRNA_LIGASE_II"/>
    <property type="match status" value="1"/>
</dbReference>
<reference key="1">
    <citation type="journal article" date="2000" name="Nature">
        <title>The complete sequence of the mucosal pathogen Ureaplasma urealyticum.</title>
        <authorList>
            <person name="Glass J.I."/>
            <person name="Lefkowitz E.J."/>
            <person name="Glass J.S."/>
            <person name="Heiner C.R."/>
            <person name="Chen E.Y."/>
            <person name="Cassell G.H."/>
        </authorList>
    </citation>
    <scope>NUCLEOTIDE SEQUENCE [LARGE SCALE GENOMIC DNA]</scope>
    <source>
        <strain>ATCC 700970</strain>
    </source>
</reference>
<gene>
    <name evidence="1" type="primary">thrS</name>
    <name type="ordered locus">UU534</name>
</gene>
<comment type="function">
    <text evidence="1">Catalyzes the attachment of threonine to tRNA(Thr) in a two-step reaction: L-threonine is first activated by ATP to form Thr-AMP and then transferred to the acceptor end of tRNA(Thr). Also edits incorrectly charged L-seryl-tRNA(Thr).</text>
</comment>
<comment type="catalytic activity">
    <reaction evidence="1">
        <text>tRNA(Thr) + L-threonine + ATP = L-threonyl-tRNA(Thr) + AMP + diphosphate + H(+)</text>
        <dbReference type="Rhea" id="RHEA:24624"/>
        <dbReference type="Rhea" id="RHEA-COMP:9670"/>
        <dbReference type="Rhea" id="RHEA-COMP:9704"/>
        <dbReference type="ChEBI" id="CHEBI:15378"/>
        <dbReference type="ChEBI" id="CHEBI:30616"/>
        <dbReference type="ChEBI" id="CHEBI:33019"/>
        <dbReference type="ChEBI" id="CHEBI:57926"/>
        <dbReference type="ChEBI" id="CHEBI:78442"/>
        <dbReference type="ChEBI" id="CHEBI:78534"/>
        <dbReference type="ChEBI" id="CHEBI:456215"/>
        <dbReference type="EC" id="6.1.1.3"/>
    </reaction>
</comment>
<comment type="cofactor">
    <cofactor evidence="1">
        <name>Zn(2+)</name>
        <dbReference type="ChEBI" id="CHEBI:29105"/>
    </cofactor>
    <text evidence="1">Binds 1 zinc ion per subunit.</text>
</comment>
<comment type="subunit">
    <text evidence="1">Homodimer.</text>
</comment>
<comment type="subcellular location">
    <subcellularLocation>
        <location evidence="1">Cytoplasm</location>
    </subcellularLocation>
</comment>
<comment type="similarity">
    <text evidence="1">Belongs to the class-II aminoacyl-tRNA synthetase family.</text>
</comment>
<feature type="chain" id="PRO_0000101081" description="Threonine--tRNA ligase">
    <location>
        <begin position="1"/>
        <end position="580"/>
    </location>
</feature>
<feature type="region of interest" description="Catalytic" evidence="1">
    <location>
        <begin position="179"/>
        <end position="476"/>
    </location>
</feature>
<feature type="binding site" evidence="1">
    <location>
        <position position="272"/>
    </location>
    <ligand>
        <name>Zn(2+)</name>
        <dbReference type="ChEBI" id="CHEBI:29105"/>
    </ligand>
</feature>
<feature type="binding site" evidence="1">
    <location>
        <position position="323"/>
    </location>
    <ligand>
        <name>Zn(2+)</name>
        <dbReference type="ChEBI" id="CHEBI:29105"/>
    </ligand>
</feature>
<feature type="binding site" evidence="1">
    <location>
        <position position="453"/>
    </location>
    <ligand>
        <name>Zn(2+)</name>
        <dbReference type="ChEBI" id="CHEBI:29105"/>
    </ligand>
</feature>
<keyword id="KW-0030">Aminoacyl-tRNA synthetase</keyword>
<keyword id="KW-0067">ATP-binding</keyword>
<keyword id="KW-0963">Cytoplasm</keyword>
<keyword id="KW-0436">Ligase</keyword>
<keyword id="KW-0479">Metal-binding</keyword>
<keyword id="KW-0547">Nucleotide-binding</keyword>
<keyword id="KW-0648">Protein biosynthesis</keyword>
<keyword id="KW-1185">Reference proteome</keyword>
<keyword id="KW-0694">RNA-binding</keyword>
<keyword id="KW-0820">tRNA-binding</keyword>
<keyword id="KW-0862">Zinc</keyword>
<protein>
    <recommendedName>
        <fullName evidence="1">Threonine--tRNA ligase</fullName>
        <ecNumber evidence="1">6.1.1.3</ecNumber>
    </recommendedName>
    <alternativeName>
        <fullName evidence="1">Threonyl-tRNA synthetase</fullName>
        <shortName evidence="1">ThrRS</shortName>
    </alternativeName>
</protein>
<accession>Q9PPV6</accession>
<organism>
    <name type="scientific">Ureaplasma parvum serovar 3 (strain ATCC 700970)</name>
    <dbReference type="NCBI Taxonomy" id="273119"/>
    <lineage>
        <taxon>Bacteria</taxon>
        <taxon>Bacillati</taxon>
        <taxon>Mycoplasmatota</taxon>
        <taxon>Mycoplasmoidales</taxon>
        <taxon>Mycoplasmoidaceae</taxon>
        <taxon>Ureaplasma</taxon>
    </lineage>
</organism>
<proteinExistence type="inferred from homology"/>
<name>SYT_UREPA</name>
<evidence type="ECO:0000255" key="1">
    <source>
        <dbReference type="HAMAP-Rule" id="MF_00184"/>
    </source>
</evidence>
<sequence length="580" mass="67752">MYKFDQKLNHSAAHLLAMALTKFYPNLSLAIGPTIDEGFYYDFNLNDPNTSITPLDLLKIEKEMKKITTQALTFDYEQVTYEKAKELFKHNKYKLDIIEQNKNNSLSIYHSGKWFDLCKGPHVQNTKEIKAIKLLNIAGSYWRGDANNDQLIRIYGVAFSDQDQLDAYLKDLQERKERDHRKIGKDLNLFTFNNLAGQGLPIWLPNGTIIKNQVQKFINEVEFQFNFDTVITPILGSIDLYKTSGHWDHYKDNIFSPVQIDNEILVLRPMTCPHHTLVYSNELRSYRSLPIRLSEHSILHRYESSGGLTGFERVREMILEDCHVFCRFDQIEHEVINAFKMIQEAQEGLGIKTFEIHLSLNDPNDKEKYYDDPQMWEQSQNVLRKMLKDHNIPYKEMVGEAAFYGPKIDFQVKTVLNRIITVSTIQLDFLLPNRFNLTYINESNEQSVPVMIHIGIIGTYERLLAILLEQTKGILPLWLSPIQVVIIPVNENLHTDYVKELNIKLRKHLIRSNVDLRNERLSKKIREAQIQKIPYQIVIGDEEIKNNKMVTYRCYGSEKTTTVSITDFINMLENKIRLKK</sequence>